<organism>
    <name type="scientific">Cronobacter sakazakii (strain ATCC BAA-894)</name>
    <name type="common">Enterobacter sakazakii</name>
    <dbReference type="NCBI Taxonomy" id="290339"/>
    <lineage>
        <taxon>Bacteria</taxon>
        <taxon>Pseudomonadati</taxon>
        <taxon>Pseudomonadota</taxon>
        <taxon>Gammaproteobacteria</taxon>
        <taxon>Enterobacterales</taxon>
        <taxon>Enterobacteriaceae</taxon>
        <taxon>Cronobacter</taxon>
    </lineage>
</organism>
<reference key="1">
    <citation type="journal article" date="2010" name="PLoS ONE">
        <title>Genome sequence of Cronobacter sakazakii BAA-894 and comparative genomic hybridization analysis with other Cronobacter species.</title>
        <authorList>
            <person name="Kucerova E."/>
            <person name="Clifton S.W."/>
            <person name="Xia X.Q."/>
            <person name="Long F."/>
            <person name="Porwollik S."/>
            <person name="Fulton L."/>
            <person name="Fronick C."/>
            <person name="Minx P."/>
            <person name="Kyung K."/>
            <person name="Warren W."/>
            <person name="Fulton R."/>
            <person name="Feng D."/>
            <person name="Wollam A."/>
            <person name="Shah N."/>
            <person name="Bhonagiri V."/>
            <person name="Nash W.E."/>
            <person name="Hallsworth-Pepin K."/>
            <person name="Wilson R.K."/>
            <person name="McClelland M."/>
            <person name="Forsythe S.J."/>
        </authorList>
    </citation>
    <scope>NUCLEOTIDE SEQUENCE [LARGE SCALE GENOMIC DNA]</scope>
    <source>
        <strain>ATCC BAA-894</strain>
    </source>
</reference>
<proteinExistence type="inferred from homology"/>
<comment type="function">
    <text evidence="1">Bidirectionally degrades single-stranded DNA into large acid-insoluble oligonucleotides, which are then degraded further into small acid-soluble oligonucleotides.</text>
</comment>
<comment type="catalytic activity">
    <reaction evidence="1">
        <text>Exonucleolytic cleavage in either 5'- to 3'- or 3'- to 5'-direction to yield nucleoside 5'-phosphates.</text>
        <dbReference type="EC" id="3.1.11.6"/>
    </reaction>
</comment>
<comment type="subunit">
    <text evidence="1">Heterooligomer composed of large and small subunits.</text>
</comment>
<comment type="subcellular location">
    <subcellularLocation>
        <location evidence="1">Cytoplasm</location>
    </subcellularLocation>
</comment>
<comment type="similarity">
    <text evidence="1">Belongs to the XseB family.</text>
</comment>
<evidence type="ECO:0000255" key="1">
    <source>
        <dbReference type="HAMAP-Rule" id="MF_00337"/>
    </source>
</evidence>
<accession>A7MFH4</accession>
<dbReference type="EC" id="3.1.11.6" evidence="1"/>
<dbReference type="EMBL" id="CP000783">
    <property type="protein sequence ID" value="ABU78109.1"/>
    <property type="molecule type" value="Genomic_DNA"/>
</dbReference>
<dbReference type="RefSeq" id="WP_004387747.1">
    <property type="nucleotide sequence ID" value="NC_009778.1"/>
</dbReference>
<dbReference type="SMR" id="A7MFH4"/>
<dbReference type="GeneID" id="56731666"/>
<dbReference type="KEGG" id="esa:ESA_02880"/>
<dbReference type="HOGENOM" id="CLU_145918_3_3_6"/>
<dbReference type="Proteomes" id="UP000000260">
    <property type="component" value="Chromosome"/>
</dbReference>
<dbReference type="GO" id="GO:0005829">
    <property type="term" value="C:cytosol"/>
    <property type="evidence" value="ECO:0007669"/>
    <property type="project" value="TreeGrafter"/>
</dbReference>
<dbReference type="GO" id="GO:0009318">
    <property type="term" value="C:exodeoxyribonuclease VII complex"/>
    <property type="evidence" value="ECO:0007669"/>
    <property type="project" value="InterPro"/>
</dbReference>
<dbReference type="GO" id="GO:0008855">
    <property type="term" value="F:exodeoxyribonuclease VII activity"/>
    <property type="evidence" value="ECO:0007669"/>
    <property type="project" value="UniProtKB-UniRule"/>
</dbReference>
<dbReference type="GO" id="GO:0006308">
    <property type="term" value="P:DNA catabolic process"/>
    <property type="evidence" value="ECO:0007669"/>
    <property type="project" value="UniProtKB-UniRule"/>
</dbReference>
<dbReference type="FunFam" id="1.10.287.1040:FF:000001">
    <property type="entry name" value="Exodeoxyribonuclease 7 small subunit"/>
    <property type="match status" value="1"/>
</dbReference>
<dbReference type="Gene3D" id="1.10.287.1040">
    <property type="entry name" value="Exonuclease VII, small subunit"/>
    <property type="match status" value="1"/>
</dbReference>
<dbReference type="HAMAP" id="MF_00337">
    <property type="entry name" value="Exonuc_7_S"/>
    <property type="match status" value="1"/>
</dbReference>
<dbReference type="InterPro" id="IPR003761">
    <property type="entry name" value="Exonuc_VII_S"/>
</dbReference>
<dbReference type="InterPro" id="IPR037004">
    <property type="entry name" value="Exonuc_VII_ssu_sf"/>
</dbReference>
<dbReference type="NCBIfam" id="NF002137">
    <property type="entry name" value="PRK00977.1-1"/>
    <property type="match status" value="1"/>
</dbReference>
<dbReference type="NCBIfam" id="NF002140">
    <property type="entry name" value="PRK00977.1-4"/>
    <property type="match status" value="1"/>
</dbReference>
<dbReference type="NCBIfam" id="TIGR01280">
    <property type="entry name" value="xseB"/>
    <property type="match status" value="1"/>
</dbReference>
<dbReference type="PANTHER" id="PTHR34137">
    <property type="entry name" value="EXODEOXYRIBONUCLEASE 7 SMALL SUBUNIT"/>
    <property type="match status" value="1"/>
</dbReference>
<dbReference type="PANTHER" id="PTHR34137:SF1">
    <property type="entry name" value="EXODEOXYRIBONUCLEASE 7 SMALL SUBUNIT"/>
    <property type="match status" value="1"/>
</dbReference>
<dbReference type="Pfam" id="PF02609">
    <property type="entry name" value="Exonuc_VII_S"/>
    <property type="match status" value="1"/>
</dbReference>
<dbReference type="PIRSF" id="PIRSF006488">
    <property type="entry name" value="Exonuc_VII_S"/>
    <property type="match status" value="1"/>
</dbReference>
<dbReference type="SUPFAM" id="SSF116842">
    <property type="entry name" value="XseB-like"/>
    <property type="match status" value="1"/>
</dbReference>
<protein>
    <recommendedName>
        <fullName evidence="1">Exodeoxyribonuclease 7 small subunit</fullName>
        <ecNumber evidence="1">3.1.11.6</ecNumber>
    </recommendedName>
    <alternativeName>
        <fullName evidence="1">Exodeoxyribonuclease VII small subunit</fullName>
        <shortName evidence="1">Exonuclease VII small subunit</shortName>
    </alternativeName>
</protein>
<keyword id="KW-0963">Cytoplasm</keyword>
<keyword id="KW-0269">Exonuclease</keyword>
<keyword id="KW-0378">Hydrolase</keyword>
<keyword id="KW-0540">Nuclease</keyword>
<keyword id="KW-1185">Reference proteome</keyword>
<feature type="chain" id="PRO_1000019580" description="Exodeoxyribonuclease 7 small subunit">
    <location>
        <begin position="1"/>
        <end position="80"/>
    </location>
</feature>
<sequence>MPKKNEQPASFETALTELEQIVTRLESGDLPLEEALNEFERGVQLARQGQVKLQQAEQRVQILLSQNEDAPLTPFTPDAE</sequence>
<name>EX7S_CROS8</name>
<gene>
    <name evidence="1" type="primary">xseB</name>
    <name type="ordered locus">ESA_02880</name>
</gene>